<name>PER1_VITRO</name>
<accession>P86103</accession>
<evidence type="ECO:0000250" key="1">
    <source>
        <dbReference type="UniProtKB" id="P22195"/>
    </source>
</evidence>
<evidence type="ECO:0000255" key="2"/>
<evidence type="ECO:0000255" key="3">
    <source>
        <dbReference type="PROSITE-ProRule" id="PRU00297"/>
    </source>
</evidence>
<evidence type="ECO:0000256" key="4">
    <source>
        <dbReference type="SAM" id="MobiDB-lite"/>
    </source>
</evidence>
<evidence type="ECO:0000305" key="5"/>
<sequence>DNTAKEKDSPANLSLRTCAAGDNAEQPLDPSRNTFDNAYYIALQRQAGVLFSDQSLFTSAR</sequence>
<proteinExistence type="evidence at protein level"/>
<comment type="function">
    <text evidence="3">Removal of H(2)O(2), oxidation of toxic reductants, biosynthesis and degradation of lignin, suberization, auxin catabolism, response to environmental stresses such as wounding, pathogen attack and oxidative stress. These functions might be dependent on each isozyme/isoform in each plant tissue.</text>
</comment>
<comment type="catalytic activity">
    <reaction>
        <text>2 a phenolic donor + H2O2 = 2 a phenolic radical donor + 2 H2O</text>
        <dbReference type="Rhea" id="RHEA:56136"/>
        <dbReference type="ChEBI" id="CHEBI:15377"/>
        <dbReference type="ChEBI" id="CHEBI:16240"/>
        <dbReference type="ChEBI" id="CHEBI:139520"/>
        <dbReference type="ChEBI" id="CHEBI:139521"/>
        <dbReference type="EC" id="1.11.1.7"/>
    </reaction>
</comment>
<comment type="cofactor">
    <cofactor evidence="1 3">
        <name>Ca(2+)</name>
        <dbReference type="ChEBI" id="CHEBI:29108"/>
    </cofactor>
    <text evidence="1 3">Binds 2 calcium ions per subunit.</text>
</comment>
<comment type="cofactor">
    <cofactor evidence="1 3">
        <name>heme b</name>
        <dbReference type="ChEBI" id="CHEBI:60344"/>
    </cofactor>
    <text evidence="1 3">Binds 1 heme b (iron(II)-protoporphyrin IX) group per subunit.</text>
</comment>
<comment type="subcellular location">
    <subcellularLocation>
        <location evidence="1 3">Secreted</location>
    </subcellularLocation>
</comment>
<comment type="miscellaneous">
    <text>On the 2D-gel the determined pI of this protein is: 6.5, its MW is: 33 kDa.</text>
</comment>
<comment type="similarity">
    <text evidence="3">Belongs to the peroxidase family. Classical plant (class III) peroxidase subfamily.</text>
</comment>
<organism>
    <name type="scientific">Vitis rotundifolia</name>
    <name type="common">Muscadine grape</name>
    <dbReference type="NCBI Taxonomy" id="103349"/>
    <lineage>
        <taxon>Eukaryota</taxon>
        <taxon>Viridiplantae</taxon>
        <taxon>Streptophyta</taxon>
        <taxon>Embryophyta</taxon>
        <taxon>Tracheophyta</taxon>
        <taxon>Spermatophyta</taxon>
        <taxon>Magnoliopsida</taxon>
        <taxon>eudicotyledons</taxon>
        <taxon>Gunneridae</taxon>
        <taxon>Pentapetalae</taxon>
        <taxon>rosids</taxon>
        <taxon>Vitales</taxon>
        <taxon>Vitaceae</taxon>
        <taxon>Viteae</taxon>
        <taxon>Vitis</taxon>
    </lineage>
</organism>
<keyword id="KW-0106">Calcium</keyword>
<keyword id="KW-0903">Direct protein sequencing</keyword>
<keyword id="KW-0325">Glycoprotein</keyword>
<keyword id="KW-0349">Heme</keyword>
<keyword id="KW-0408">Iron</keyword>
<keyword id="KW-0479">Metal-binding</keyword>
<keyword id="KW-0560">Oxidoreductase</keyword>
<keyword id="KW-0575">Peroxidase</keyword>
<keyword id="KW-0964">Secreted</keyword>
<dbReference type="EC" id="1.11.1.7"/>
<dbReference type="SMR" id="P86103"/>
<dbReference type="GO" id="GO:0005576">
    <property type="term" value="C:extracellular region"/>
    <property type="evidence" value="ECO:0007669"/>
    <property type="project" value="UniProtKB-SubCell"/>
</dbReference>
<dbReference type="GO" id="GO:0020037">
    <property type="term" value="F:heme binding"/>
    <property type="evidence" value="ECO:0007669"/>
    <property type="project" value="InterPro"/>
</dbReference>
<dbReference type="GO" id="GO:0140825">
    <property type="term" value="F:lactoperoxidase activity"/>
    <property type="evidence" value="ECO:0007669"/>
    <property type="project" value="UniProtKB-EC"/>
</dbReference>
<dbReference type="GO" id="GO:0046872">
    <property type="term" value="F:metal ion binding"/>
    <property type="evidence" value="ECO:0007669"/>
    <property type="project" value="UniProtKB-KW"/>
</dbReference>
<dbReference type="GO" id="GO:0006979">
    <property type="term" value="P:response to oxidative stress"/>
    <property type="evidence" value="ECO:0007669"/>
    <property type="project" value="InterPro"/>
</dbReference>
<dbReference type="Gene3D" id="1.10.420.10">
    <property type="entry name" value="Peroxidase, domain 2"/>
    <property type="match status" value="1"/>
</dbReference>
<dbReference type="InterPro" id="IPR002016">
    <property type="entry name" value="Haem_peroxidase"/>
</dbReference>
<dbReference type="InterPro" id="IPR010255">
    <property type="entry name" value="Haem_peroxidase_sf"/>
</dbReference>
<dbReference type="Pfam" id="PF00141">
    <property type="entry name" value="peroxidase"/>
    <property type="match status" value="1"/>
</dbReference>
<dbReference type="SUPFAM" id="SSF48113">
    <property type="entry name" value="Heme-dependent peroxidases"/>
    <property type="match status" value="1"/>
</dbReference>
<feature type="chain" id="PRO_0000358861" description="Peroxidase 1">
    <location>
        <begin position="1" status="less than"/>
        <end position="61" status="greater than"/>
    </location>
</feature>
<feature type="region of interest" description="Disordered" evidence="4">
    <location>
        <begin position="1"/>
        <end position="32"/>
    </location>
</feature>
<feature type="binding site" evidence="3">
    <location>
        <position position="29"/>
    </location>
    <ligand>
        <name>Ca(2+)</name>
        <dbReference type="ChEBI" id="CHEBI:29108"/>
        <label>2</label>
    </ligand>
</feature>
<feature type="binding site" evidence="3">
    <location>
        <position position="31"/>
    </location>
    <ligand>
        <name>Ca(2+)</name>
        <dbReference type="ChEBI" id="CHEBI:29108"/>
        <label>2</label>
    </ligand>
</feature>
<feature type="binding site" evidence="1 3">
    <location>
        <position position="36"/>
    </location>
    <ligand>
        <name>Ca(2+)</name>
        <dbReference type="ChEBI" id="CHEBI:29108"/>
        <label>2</label>
    </ligand>
</feature>
<feature type="glycosylation site" description="N-linked (GlcNAc...) asparagine" evidence="2">
    <location>
        <position position="12"/>
    </location>
</feature>
<feature type="non-consecutive residues" evidence="5">
    <location>
        <begin position="16"/>
        <end position="17"/>
    </location>
</feature>
<feature type="non-terminal residue">
    <location>
        <position position="1"/>
    </location>
</feature>
<feature type="non-terminal residue">
    <location>
        <position position="61"/>
    </location>
</feature>
<reference key="1">
    <citation type="journal article" date="2010" name="Appl. Biochem. Biotechnol.">
        <title>Proteomics approach to identify unique xylem sap proteins in Pierce's disease-tolerant Vitis species.</title>
        <authorList>
            <person name="Basha S.M."/>
            <person name="Mazhar H."/>
            <person name="Vasanthaiah H.K.N."/>
        </authorList>
    </citation>
    <scope>PROTEIN SEQUENCE</scope>
    <source>
        <tissue>Xylem</tissue>
    </source>
</reference>
<protein>
    <recommendedName>
        <fullName evidence="1">Peroxidase 1</fullName>
        <ecNumber>1.11.1.7</ecNumber>
    </recommendedName>
</protein>